<gene>
    <name type="primary">P</name>
</gene>
<feature type="chain" id="PRO_0000222330" description="Protein P">
    <location>
        <begin position="1"/>
        <end position="788"/>
    </location>
</feature>
<feature type="domain" description="Reverse transcriptase" evidence="2">
    <location>
        <begin position="376"/>
        <end position="565"/>
    </location>
</feature>
<feature type="region of interest" description="Terminal protein domain (TP)" evidence="1">
    <location>
        <begin position="1"/>
        <end position="200"/>
    </location>
</feature>
<feature type="region of interest" description="Disordered" evidence="3">
    <location>
        <begin position="36"/>
        <end position="56"/>
    </location>
</feature>
<feature type="region of interest" description="Spacer" evidence="1">
    <location>
        <begin position="201"/>
        <end position="365"/>
    </location>
</feature>
<feature type="region of interest" description="Disordered" evidence="3">
    <location>
        <begin position="220"/>
        <end position="242"/>
    </location>
</feature>
<feature type="region of interest" description="Disordered" evidence="3">
    <location>
        <begin position="288"/>
        <end position="380"/>
    </location>
</feature>
<feature type="region of interest" description="Polymerase/reverse transcriptase domain (RT)" evidence="1">
    <location>
        <begin position="366"/>
        <end position="655"/>
    </location>
</feature>
<feature type="region of interest" description="RnaseH domain (RH)" evidence="1">
    <location>
        <begin position="656"/>
        <end position="788"/>
    </location>
</feature>
<feature type="binding site" evidence="2">
    <location>
        <position position="448"/>
    </location>
    <ligand>
        <name>Mg(2+)</name>
        <dbReference type="ChEBI" id="CHEBI:18420"/>
        <note>catalytic</note>
    </ligand>
</feature>
<feature type="binding site" evidence="2">
    <location>
        <position position="515"/>
    </location>
    <ligand>
        <name>Mg(2+)</name>
        <dbReference type="ChEBI" id="CHEBI:18420"/>
        <note>catalytic</note>
    </ligand>
</feature>
<feature type="binding site" evidence="2">
    <location>
        <position position="516"/>
    </location>
    <ligand>
        <name>Mg(2+)</name>
        <dbReference type="ChEBI" id="CHEBI:18420"/>
        <note>catalytic</note>
    </ligand>
</feature>
<feature type="site" description="Priming of reverse-transcription by covalently linking the first nucleotide of the (-)DNA" evidence="1">
    <location>
        <position position="96"/>
    </location>
</feature>
<sequence length="788" mass="89265">MPQPLKQSLDQSKWLREAEKHLRELENLVDSNLEEEKLKPHLSMGEDVQSPGKGEPLHPNVRAPLSHVVRAATIDLPRLGNKLPAKHHLGKLSGLYQMKGCSFNPEWKVPDISDTHFDLQVINECPSRNWKYLTPAKFWPKSISYFPVQAGVKAKYPDNVMQHEAIVGKYLNRLYEAGILYKRISKHLVTFKGKPYHWELQYLVKQHQVPDGTTTCKINGREENRRRRAPAKSISRPHDTERNCHMVGQVSNNRSPIRSCANNGGGKYSSTTRRMACWGGQTIGVNQSCSPRTSAASVDAGRRSKSSRGLSSLSRRETTGNHHHSTNVTNSVEAATRGRSPAGKQVSARDTSSLPESGASRACDKNSSPQKEENGWYLRGNTSWPNRITGRLFLVDKNSRNTTEARLVVDFSQFSKGKNAMRFPRYWSPNLSTLRRILPVGMPRISLDLSQAFYHLPLNPASSSRLAVSDGQHVYYFRKAPMGVGLSPFLLHLFTTALGSEIARRFNVWTFTYMDDFLLCHPNARHLNSISHAVCTFLQELGIRINFDKTTPSPVNDIRFLGYQIDQKFMRIEESRWKELRTVIKKIKIGAWYDWKCIQRFVGHLNFVLPFTKGNIEMLKPMYAAITNKVNFSFSSAYRTLLYKLTMGVCKLTIRPKSSVPLPRVATDATPTHGAISHITGGSAVLAFSKVRDIHIQELLMVCLAKIMIKPRCILSDSTFVCYKRYHTLPWHFAMLAKQLLSPIQLYFVPSKYNPADGPSRHKPPDWTALTYTPLSKAIYIPHRLCGT</sequence>
<name>DPOL_HPBDW</name>
<comment type="function">
    <text evidence="1">Multifunctional enzyme that converts the viral RNA genome into dsDNA in viral cytoplasmic capsids. This enzyme displays a DNA polymerase activity that can copy either DNA or RNA templates, and a ribonuclease H (RNase H) activity that cleaves the RNA strand of RNA-DNA heteroduplexes in a partially processive 3'- to 5'-endonucleasic mode. Neo-synthesized pregenomic RNA (pgRNA) are encapsidated together with the P protein, and reverse-transcribed inside the nucleocapsid. Initiation of reverse-transcription occurs first by binding the epsilon loop on the pgRNA genome, and is initiated by protein priming, thereby the 5'-end of (-)DNA is covalently linked to P protein. Partial (+)DNA is synthesized from the (-)DNA template and generates the relaxed circular DNA (RC-DNA) genome. After budding and infection, the RC-DNA migrates in the nucleus, and is converted into a plasmid-like covalently closed circular DNA (cccDNA). The activity of P protein does not seem to be necessary for cccDNA generation, and is presumably released from (+)DNA by host nuclear DNA repair machinery (By similarity).</text>
</comment>
<comment type="catalytic activity">
    <reaction evidence="2">
        <text>DNA(n) + a 2'-deoxyribonucleoside 5'-triphosphate = DNA(n+1) + diphosphate</text>
        <dbReference type="Rhea" id="RHEA:22508"/>
        <dbReference type="Rhea" id="RHEA-COMP:17339"/>
        <dbReference type="Rhea" id="RHEA-COMP:17340"/>
        <dbReference type="ChEBI" id="CHEBI:33019"/>
        <dbReference type="ChEBI" id="CHEBI:61560"/>
        <dbReference type="ChEBI" id="CHEBI:173112"/>
        <dbReference type="EC" id="2.7.7.7"/>
    </reaction>
</comment>
<comment type="catalytic activity">
    <reaction evidence="2">
        <text>DNA(n) + a 2'-deoxyribonucleoside 5'-triphosphate = DNA(n+1) + diphosphate</text>
        <dbReference type="Rhea" id="RHEA:22508"/>
        <dbReference type="Rhea" id="RHEA-COMP:17339"/>
        <dbReference type="Rhea" id="RHEA-COMP:17340"/>
        <dbReference type="ChEBI" id="CHEBI:33019"/>
        <dbReference type="ChEBI" id="CHEBI:61560"/>
        <dbReference type="ChEBI" id="CHEBI:173112"/>
        <dbReference type="EC" id="2.7.7.49"/>
    </reaction>
</comment>
<comment type="catalytic activity">
    <reaction>
        <text>Endonucleolytic cleavage to 5'-phosphomonoester.</text>
        <dbReference type="EC" id="3.1.26.4"/>
    </reaction>
</comment>
<comment type="activity regulation">
    <text>Activated by host HSP70 and HSP40 in vitro to be able to bind the epsilon loop of the pgRNA. Because deletion of the RNase H region renders the protein partly chaperone-independent, the chaperones may be needed indirectly to relieve occlusion of the RNA-binding site by this domain.</text>
</comment>
<comment type="domain">
    <text evidence="1">Terminal protein domain (TP) is hepadnavirus-specific. Spacer domain is highly variable and separates the TP and RT domains. Polymerase/reverse-transcriptase domain (RT) and ribonuclease H domain (RH) are similar to retrovirus reverse transcriptase/RNase H (By similarity).</text>
</comment>
<comment type="domain">
    <text evidence="1">The polymerase/reverse transcriptase (RT) and ribonuclease H (RH) domains are structured in five subdomains: finger, palm, thumb, connection and RNase H. Within the palm subdomain, the 'primer grip' region is thought to be involved in the positioning of the primer terminus for accommodating the incoming nucleotide. The RH domain stabilizes the association of RT with primer-template (By similarity).</text>
</comment>
<comment type="similarity">
    <text evidence="4">Belongs to the hepadnaviridae P protein family.</text>
</comment>
<proteinExistence type="inferred from homology"/>
<evidence type="ECO:0000250" key="1"/>
<evidence type="ECO:0000255" key="2">
    <source>
        <dbReference type="PROSITE-ProRule" id="PRU00405"/>
    </source>
</evidence>
<evidence type="ECO:0000256" key="3">
    <source>
        <dbReference type="SAM" id="MobiDB-lite"/>
    </source>
</evidence>
<evidence type="ECO:0000305" key="4"/>
<organism>
    <name type="scientific">Duck hepatitis B virus (isolate white Shanghai duck S31)</name>
    <name type="common">DHBV</name>
    <dbReference type="NCBI Taxonomy" id="10440"/>
    <lineage>
        <taxon>Viruses</taxon>
        <taxon>Riboviria</taxon>
        <taxon>Pararnavirae</taxon>
        <taxon>Artverviricota</taxon>
        <taxon>Revtraviricetes</taxon>
        <taxon>Blubervirales</taxon>
        <taxon>Hepadnaviridae</taxon>
        <taxon>Avihepadnavirus</taxon>
        <taxon>Duck hepatitis B virus</taxon>
    </lineage>
</organism>
<keyword id="KW-0235">DNA replication</keyword>
<keyword id="KW-0238">DNA-binding</keyword>
<keyword id="KW-0239">DNA-directed DNA polymerase</keyword>
<keyword id="KW-0255">Endonuclease</keyword>
<keyword id="KW-0378">Hydrolase</keyword>
<keyword id="KW-0460">Magnesium</keyword>
<keyword id="KW-0479">Metal-binding</keyword>
<keyword id="KW-0511">Multifunctional enzyme</keyword>
<keyword id="KW-0540">Nuclease</keyword>
<keyword id="KW-0548">Nucleotidyltransferase</keyword>
<keyword id="KW-0695">RNA-directed DNA polymerase</keyword>
<keyword id="KW-0808">Transferase</keyword>
<accession>P17193</accession>
<dbReference type="EC" id="2.7.7.7"/>
<dbReference type="EC" id="2.7.7.49"/>
<dbReference type="EC" id="3.1.26.4"/>
<dbReference type="EMBL" id="M32991">
    <property type="protein sequence ID" value="AAA45751.1"/>
    <property type="molecule type" value="Genomic_DNA"/>
</dbReference>
<dbReference type="PIR" id="B33746">
    <property type="entry name" value="JDVLWD"/>
</dbReference>
<dbReference type="Proteomes" id="UP000007558">
    <property type="component" value="Genome"/>
</dbReference>
<dbReference type="GO" id="GO:0003677">
    <property type="term" value="F:DNA binding"/>
    <property type="evidence" value="ECO:0007669"/>
    <property type="project" value="UniProtKB-KW"/>
</dbReference>
<dbReference type="GO" id="GO:0003887">
    <property type="term" value="F:DNA-directed DNA polymerase activity"/>
    <property type="evidence" value="ECO:0007669"/>
    <property type="project" value="UniProtKB-KW"/>
</dbReference>
<dbReference type="GO" id="GO:0046872">
    <property type="term" value="F:metal ion binding"/>
    <property type="evidence" value="ECO:0007669"/>
    <property type="project" value="UniProtKB-KW"/>
</dbReference>
<dbReference type="GO" id="GO:0003964">
    <property type="term" value="F:RNA-directed DNA polymerase activity"/>
    <property type="evidence" value="ECO:0007669"/>
    <property type="project" value="UniProtKB-KW"/>
</dbReference>
<dbReference type="GO" id="GO:0004523">
    <property type="term" value="F:RNA-DNA hybrid ribonuclease activity"/>
    <property type="evidence" value="ECO:0007669"/>
    <property type="project" value="UniProtKB-EC"/>
</dbReference>
<dbReference type="GO" id="GO:0006260">
    <property type="term" value="P:DNA replication"/>
    <property type="evidence" value="ECO:0007669"/>
    <property type="project" value="UniProtKB-KW"/>
</dbReference>
<dbReference type="FunFam" id="3.30.70.270:FF:000058">
    <property type="entry name" value="Protein P"/>
    <property type="match status" value="1"/>
</dbReference>
<dbReference type="Gene3D" id="3.30.70.270">
    <property type="match status" value="1"/>
</dbReference>
<dbReference type="Gene3D" id="3.10.10.10">
    <property type="entry name" value="HIV Type 1 Reverse Transcriptase, subunit A, domain 1"/>
    <property type="match status" value="1"/>
</dbReference>
<dbReference type="InterPro" id="IPR043502">
    <property type="entry name" value="DNA/RNA_pol_sf"/>
</dbReference>
<dbReference type="InterPro" id="IPR001462">
    <property type="entry name" value="DNApol_viral_C"/>
</dbReference>
<dbReference type="InterPro" id="IPR000201">
    <property type="entry name" value="DNApol_viral_N"/>
</dbReference>
<dbReference type="InterPro" id="IPR052055">
    <property type="entry name" value="Hepadnavirus_pol/RT"/>
</dbReference>
<dbReference type="InterPro" id="IPR043128">
    <property type="entry name" value="Rev_trsase/Diguanyl_cyclase"/>
</dbReference>
<dbReference type="InterPro" id="IPR000477">
    <property type="entry name" value="RT_dom"/>
</dbReference>
<dbReference type="PANTHER" id="PTHR33050">
    <property type="entry name" value="REVERSE TRANSCRIPTASE DOMAIN-CONTAINING PROTEIN"/>
    <property type="match status" value="1"/>
</dbReference>
<dbReference type="PANTHER" id="PTHR33050:SF7">
    <property type="entry name" value="RIBONUCLEASE H"/>
    <property type="match status" value="1"/>
</dbReference>
<dbReference type="Pfam" id="PF00336">
    <property type="entry name" value="DNA_pol_viral_C"/>
    <property type="match status" value="1"/>
</dbReference>
<dbReference type="Pfam" id="PF00242">
    <property type="entry name" value="DNA_pol_viral_N"/>
    <property type="match status" value="1"/>
</dbReference>
<dbReference type="Pfam" id="PF00078">
    <property type="entry name" value="RVT_1"/>
    <property type="match status" value="1"/>
</dbReference>
<dbReference type="SUPFAM" id="SSF56672">
    <property type="entry name" value="DNA/RNA polymerases"/>
    <property type="match status" value="1"/>
</dbReference>
<dbReference type="PROSITE" id="PS50878">
    <property type="entry name" value="RT_POL"/>
    <property type="match status" value="1"/>
</dbReference>
<reference key="1">
    <citation type="journal article" date="1989" name="Virology">
        <title>Molecular cloning and sequence analysis of duck hepatitis B virus genomes of a new variant isolated from Shanghai ducks.</title>
        <authorList>
            <person name="Uchida M."/>
            <person name="Esumi M."/>
            <person name="Shikata T."/>
        </authorList>
    </citation>
    <scope>NUCLEOTIDE SEQUENCE [GENOMIC DNA]</scope>
</reference>
<reference key="2">
    <citation type="journal article" date="2007" name="World J. Gastroenterol.">
        <title>Hepatitis B virus replication.</title>
        <authorList>
            <person name="Beck J."/>
            <person name="Nassal M."/>
        </authorList>
    </citation>
    <scope>REVIEW</scope>
</reference>
<organismHost>
    <name type="scientific">Anas</name>
    <name type="common">ducks</name>
    <dbReference type="NCBI Taxonomy" id="8835"/>
</organismHost>
<protein>
    <recommendedName>
        <fullName>Protein P</fullName>
    </recommendedName>
    <domain>
        <recommendedName>
            <fullName>DNA-directed DNA polymerase</fullName>
            <ecNumber>2.7.7.7</ecNumber>
        </recommendedName>
    </domain>
    <domain>
        <recommendedName>
            <fullName>RNA-directed DNA polymerase</fullName>
            <ecNumber>2.7.7.49</ecNumber>
        </recommendedName>
    </domain>
    <domain>
        <recommendedName>
            <fullName>Ribonuclease H</fullName>
            <ecNumber>3.1.26.4</ecNumber>
        </recommendedName>
    </domain>
</protein>